<reference key="1">
    <citation type="journal article" date="2005" name="Science">
        <title>The transcriptional landscape of the mammalian genome.</title>
        <authorList>
            <person name="Carninci P."/>
            <person name="Kasukawa T."/>
            <person name="Katayama S."/>
            <person name="Gough J."/>
            <person name="Frith M.C."/>
            <person name="Maeda N."/>
            <person name="Oyama R."/>
            <person name="Ravasi T."/>
            <person name="Lenhard B."/>
            <person name="Wells C."/>
            <person name="Kodzius R."/>
            <person name="Shimokawa K."/>
            <person name="Bajic V.B."/>
            <person name="Brenner S.E."/>
            <person name="Batalov S."/>
            <person name="Forrest A.R."/>
            <person name="Zavolan M."/>
            <person name="Davis M.J."/>
            <person name="Wilming L.G."/>
            <person name="Aidinis V."/>
            <person name="Allen J.E."/>
            <person name="Ambesi-Impiombato A."/>
            <person name="Apweiler R."/>
            <person name="Aturaliya R.N."/>
            <person name="Bailey T.L."/>
            <person name="Bansal M."/>
            <person name="Baxter L."/>
            <person name="Beisel K.W."/>
            <person name="Bersano T."/>
            <person name="Bono H."/>
            <person name="Chalk A.M."/>
            <person name="Chiu K.P."/>
            <person name="Choudhary V."/>
            <person name="Christoffels A."/>
            <person name="Clutterbuck D.R."/>
            <person name="Crowe M.L."/>
            <person name="Dalla E."/>
            <person name="Dalrymple B.P."/>
            <person name="de Bono B."/>
            <person name="Della Gatta G."/>
            <person name="di Bernardo D."/>
            <person name="Down T."/>
            <person name="Engstrom P."/>
            <person name="Fagiolini M."/>
            <person name="Faulkner G."/>
            <person name="Fletcher C.F."/>
            <person name="Fukushima T."/>
            <person name="Furuno M."/>
            <person name="Futaki S."/>
            <person name="Gariboldi M."/>
            <person name="Georgii-Hemming P."/>
            <person name="Gingeras T.R."/>
            <person name="Gojobori T."/>
            <person name="Green R.E."/>
            <person name="Gustincich S."/>
            <person name="Harbers M."/>
            <person name="Hayashi Y."/>
            <person name="Hensch T.K."/>
            <person name="Hirokawa N."/>
            <person name="Hill D."/>
            <person name="Huminiecki L."/>
            <person name="Iacono M."/>
            <person name="Ikeo K."/>
            <person name="Iwama A."/>
            <person name="Ishikawa T."/>
            <person name="Jakt M."/>
            <person name="Kanapin A."/>
            <person name="Katoh M."/>
            <person name="Kawasawa Y."/>
            <person name="Kelso J."/>
            <person name="Kitamura H."/>
            <person name="Kitano H."/>
            <person name="Kollias G."/>
            <person name="Krishnan S.P."/>
            <person name="Kruger A."/>
            <person name="Kummerfeld S.K."/>
            <person name="Kurochkin I.V."/>
            <person name="Lareau L.F."/>
            <person name="Lazarevic D."/>
            <person name="Lipovich L."/>
            <person name="Liu J."/>
            <person name="Liuni S."/>
            <person name="McWilliam S."/>
            <person name="Madan Babu M."/>
            <person name="Madera M."/>
            <person name="Marchionni L."/>
            <person name="Matsuda H."/>
            <person name="Matsuzawa S."/>
            <person name="Miki H."/>
            <person name="Mignone F."/>
            <person name="Miyake S."/>
            <person name="Morris K."/>
            <person name="Mottagui-Tabar S."/>
            <person name="Mulder N."/>
            <person name="Nakano N."/>
            <person name="Nakauchi H."/>
            <person name="Ng P."/>
            <person name="Nilsson R."/>
            <person name="Nishiguchi S."/>
            <person name="Nishikawa S."/>
            <person name="Nori F."/>
            <person name="Ohara O."/>
            <person name="Okazaki Y."/>
            <person name="Orlando V."/>
            <person name="Pang K.C."/>
            <person name="Pavan W.J."/>
            <person name="Pavesi G."/>
            <person name="Pesole G."/>
            <person name="Petrovsky N."/>
            <person name="Piazza S."/>
            <person name="Reed J."/>
            <person name="Reid J.F."/>
            <person name="Ring B.Z."/>
            <person name="Ringwald M."/>
            <person name="Rost B."/>
            <person name="Ruan Y."/>
            <person name="Salzberg S.L."/>
            <person name="Sandelin A."/>
            <person name="Schneider C."/>
            <person name="Schoenbach C."/>
            <person name="Sekiguchi K."/>
            <person name="Semple C.A."/>
            <person name="Seno S."/>
            <person name="Sessa L."/>
            <person name="Sheng Y."/>
            <person name="Shibata Y."/>
            <person name="Shimada H."/>
            <person name="Shimada K."/>
            <person name="Silva D."/>
            <person name="Sinclair B."/>
            <person name="Sperling S."/>
            <person name="Stupka E."/>
            <person name="Sugiura K."/>
            <person name="Sultana R."/>
            <person name="Takenaka Y."/>
            <person name="Taki K."/>
            <person name="Tammoja K."/>
            <person name="Tan S.L."/>
            <person name="Tang S."/>
            <person name="Taylor M.S."/>
            <person name="Tegner J."/>
            <person name="Teichmann S.A."/>
            <person name="Ueda H.R."/>
            <person name="van Nimwegen E."/>
            <person name="Verardo R."/>
            <person name="Wei C.L."/>
            <person name="Yagi K."/>
            <person name="Yamanishi H."/>
            <person name="Zabarovsky E."/>
            <person name="Zhu S."/>
            <person name="Zimmer A."/>
            <person name="Hide W."/>
            <person name="Bult C."/>
            <person name="Grimmond S.M."/>
            <person name="Teasdale R.D."/>
            <person name="Liu E.T."/>
            <person name="Brusic V."/>
            <person name="Quackenbush J."/>
            <person name="Wahlestedt C."/>
            <person name="Mattick J.S."/>
            <person name="Hume D.A."/>
            <person name="Kai C."/>
            <person name="Sasaki D."/>
            <person name="Tomaru Y."/>
            <person name="Fukuda S."/>
            <person name="Kanamori-Katayama M."/>
            <person name="Suzuki M."/>
            <person name="Aoki J."/>
            <person name="Arakawa T."/>
            <person name="Iida J."/>
            <person name="Imamura K."/>
            <person name="Itoh M."/>
            <person name="Kato T."/>
            <person name="Kawaji H."/>
            <person name="Kawagashira N."/>
            <person name="Kawashima T."/>
            <person name="Kojima M."/>
            <person name="Kondo S."/>
            <person name="Konno H."/>
            <person name="Nakano K."/>
            <person name="Ninomiya N."/>
            <person name="Nishio T."/>
            <person name="Okada M."/>
            <person name="Plessy C."/>
            <person name="Shibata K."/>
            <person name="Shiraki T."/>
            <person name="Suzuki S."/>
            <person name="Tagami M."/>
            <person name="Waki K."/>
            <person name="Watahiki A."/>
            <person name="Okamura-Oho Y."/>
            <person name="Suzuki H."/>
            <person name="Kawai J."/>
            <person name="Hayashizaki Y."/>
        </authorList>
    </citation>
    <scope>NUCLEOTIDE SEQUENCE [LARGE SCALE MRNA] (ISOFORMS 1; 2 AND 3)</scope>
    <source>
        <strain>C57BL/6J</strain>
        <tissue>Testis</tissue>
    </source>
</reference>
<reference key="2">
    <citation type="journal article" date="2004" name="Genome Res.">
        <title>The status, quality, and expansion of the NIH full-length cDNA project: the Mammalian Gene Collection (MGC).</title>
        <authorList>
            <consortium name="The MGC Project Team"/>
        </authorList>
    </citation>
    <scope>NUCLEOTIDE SEQUENCE [LARGE SCALE MRNA] (ISOFORM 1)</scope>
    <source>
        <tissue>Eye</tissue>
    </source>
</reference>
<reference key="3">
    <citation type="journal article" date="2008" name="BMC Cell Biol.">
        <title>Identification of a novel Leucine-rich repeat protein and candidate PP1 regulatory subunit expressed in developing spermatids.</title>
        <authorList>
            <person name="Wang R."/>
            <person name="Sperry A.O."/>
        </authorList>
    </citation>
    <scope>INTERACTION WITH KIFC1</scope>
    <scope>SUBCELLULAR LOCATION</scope>
    <scope>TISSUE SPECIFICITY</scope>
</reference>
<reference key="4">
    <citation type="journal article" date="2010" name="Biol. Cell">
        <title>TLRR (lrrc67) interacts with PP1 and is associated with a cytoskeletal complex in the testis.</title>
        <authorList>
            <person name="Wang R."/>
            <person name="Kaul A."/>
            <person name="Sperry A.O."/>
        </authorList>
    </citation>
    <scope>INTERACTION WITH ACTIN; DYNEIN; PPP1CC; KIF5B AND TUBULIN</scope>
    <scope>ASSOCIATION WITH MICROTUBULES</scope>
    <scope>SUBCELLULAR LOCATION</scope>
</reference>
<reference key="5">
    <citation type="journal article" date="2011" name="PLoS ONE">
        <title>PP1 forms an active complex with TLRR (lrrc67), a putative PP1 regulatory subunit, during the early stages of spermiogenesis in mice.</title>
        <authorList>
            <person name="Wang R."/>
            <person name="Sperry A.O."/>
        </authorList>
    </citation>
    <scope>FUNCTION</scope>
    <scope>INTERACTION WITH PPP1CC</scope>
    <scope>PHOSPHORYLATION</scope>
</reference>
<accession>Q8R1Z4</accession>
<accession>Q9D5M1</accession>
<accession>Q9DAF9</accession>
<evidence type="ECO:0000256" key="1">
    <source>
        <dbReference type="SAM" id="MobiDB-lite"/>
    </source>
</evidence>
<evidence type="ECO:0000269" key="2">
    <source>
    </source>
</evidence>
<evidence type="ECO:0000269" key="3">
    <source>
    </source>
</evidence>
<evidence type="ECO:0000269" key="4">
    <source>
    </source>
</evidence>
<evidence type="ECO:0000303" key="5">
    <source>
    </source>
</evidence>
<protein>
    <recommendedName>
        <fullName>Protein phosphatase 1 regulatory subunit 42</fullName>
    </recommendedName>
    <alternativeName>
        <fullName>Leucine-rich repeat-containing protein 67</fullName>
    </alternativeName>
    <alternativeName>
        <fullName>Testis leucine-rich repeat protein</fullName>
        <shortName>TLRR</shortName>
    </alternativeName>
</protein>
<feature type="chain" id="PRO_0000326177" description="Protein phosphatase 1 regulatory subunit 42">
    <location>
        <begin position="1"/>
        <end position="357"/>
    </location>
</feature>
<feature type="repeat" description="LRR 1">
    <location>
        <begin position="29"/>
        <end position="50"/>
    </location>
</feature>
<feature type="repeat" description="LRR 2">
    <location>
        <begin position="51"/>
        <end position="72"/>
    </location>
</feature>
<feature type="repeat" description="LRR 3">
    <location>
        <begin position="73"/>
        <end position="94"/>
    </location>
</feature>
<feature type="repeat" description="LRR 4">
    <location>
        <begin position="95"/>
        <end position="116"/>
    </location>
</feature>
<feature type="repeat" description="LRR 5">
    <location>
        <begin position="117"/>
        <end position="138"/>
    </location>
</feature>
<feature type="repeat" description="LRR 6">
    <location>
        <begin position="147"/>
        <end position="168"/>
    </location>
</feature>
<feature type="repeat" description="LRR 7">
    <location>
        <begin position="169"/>
        <end position="190"/>
    </location>
</feature>
<feature type="domain" description="LRRCT">
    <location>
        <begin position="204"/>
        <end position="242"/>
    </location>
</feature>
<feature type="region of interest" description="Disordered" evidence="1">
    <location>
        <begin position="329"/>
        <end position="357"/>
    </location>
</feature>
<feature type="compositionally biased region" description="Basic and acidic residues" evidence="1">
    <location>
        <begin position="335"/>
        <end position="357"/>
    </location>
</feature>
<feature type="splice variant" id="VSP_032589" description="In isoform 3." evidence="5">
    <location>
        <begin position="146"/>
        <end position="357"/>
    </location>
</feature>
<feature type="splice variant" id="VSP_032590" description="In isoform 2." evidence="5">
    <original>DL</original>
    <variation>VT</variation>
    <location>
        <begin position="185"/>
        <end position="186"/>
    </location>
</feature>
<feature type="splice variant" id="VSP_032591" description="In isoform 2." evidence="5">
    <location>
        <begin position="187"/>
        <end position="357"/>
    </location>
</feature>
<gene>
    <name type="primary">Ppp1r42</name>
    <name type="synonym">Lrrc67</name>
</gene>
<keyword id="KW-0025">Alternative splicing</keyword>
<keyword id="KW-0963">Cytoplasm</keyword>
<keyword id="KW-0206">Cytoskeleton</keyword>
<keyword id="KW-0433">Leucine-rich repeat</keyword>
<keyword id="KW-1185">Reference proteome</keyword>
<keyword id="KW-0677">Repeat</keyword>
<name>PPR42_MOUSE</name>
<sequence length="357" mass="41151">MVRLTVDLIAKNSNLKPRKEETLAQCLKKITHINFSDRNIDSIDDLSLCRNLSVLYLYDNRISQVTNLNYTTNLTHLYLQNNCISCIENLSSLKKLEKLYLGGNYIAVIEGLEGLEELRELHVESQRLPLGEKLLFDPRTLRSLAKSLSTLNISNNNIDDIKDLEILENLNHLIAVDNQLMHVKDLELLLKKLMKLWKMDLNGNPVCLKPKYRDKLILTSKSLEFLDGKEIKDMERQFLMNWKASKDAKKISKKRRSRSEDASNSYISNFETVHHIVPVYYPQVGKPKVIFFSDVQRYLVHGNASSKCSQEDKTTITEDIGNLSLKESESSLTKNDIHEPHLLQNPKVKENLSEKKE</sequence>
<organism>
    <name type="scientific">Mus musculus</name>
    <name type="common">Mouse</name>
    <dbReference type="NCBI Taxonomy" id="10090"/>
    <lineage>
        <taxon>Eukaryota</taxon>
        <taxon>Metazoa</taxon>
        <taxon>Chordata</taxon>
        <taxon>Craniata</taxon>
        <taxon>Vertebrata</taxon>
        <taxon>Euteleostomi</taxon>
        <taxon>Mammalia</taxon>
        <taxon>Eutheria</taxon>
        <taxon>Euarchontoglires</taxon>
        <taxon>Glires</taxon>
        <taxon>Rodentia</taxon>
        <taxon>Myomorpha</taxon>
        <taxon>Muroidea</taxon>
        <taxon>Muridae</taxon>
        <taxon>Murinae</taxon>
        <taxon>Mus</taxon>
        <taxon>Mus</taxon>
    </lineage>
</organism>
<dbReference type="EMBL" id="AK005871">
    <property type="protein sequence ID" value="BAB24290.1"/>
    <property type="molecule type" value="mRNA"/>
</dbReference>
<dbReference type="EMBL" id="AK015164">
    <property type="protein sequence ID" value="BAB29732.1"/>
    <property type="molecule type" value="mRNA"/>
</dbReference>
<dbReference type="EMBL" id="AK076637">
    <property type="protein sequence ID" value="BAC36427.1"/>
    <property type="molecule type" value="mRNA"/>
</dbReference>
<dbReference type="EMBL" id="BC022722">
    <property type="protein sequence ID" value="AAH22722.1"/>
    <property type="molecule type" value="mRNA"/>
</dbReference>
<dbReference type="CCDS" id="CCDS14817.1">
    <molecule id="Q8R1Z4-1"/>
</dbReference>
<dbReference type="RefSeq" id="NP_663730.1">
    <molecule id="Q8R1Z4-1"/>
    <property type="nucleotide sequence ID" value="NM_145692.2"/>
</dbReference>
<dbReference type="SMR" id="Q8R1Z4"/>
<dbReference type="FunCoup" id="Q8R1Z4">
    <property type="interactions" value="99"/>
</dbReference>
<dbReference type="IntAct" id="Q8R1Z4">
    <property type="interactions" value="3"/>
</dbReference>
<dbReference type="MINT" id="Q8R1Z4"/>
<dbReference type="STRING" id="10090.ENSMUSP00000027049"/>
<dbReference type="iPTMnet" id="Q8R1Z4"/>
<dbReference type="PhosphoSitePlus" id="Q8R1Z4"/>
<dbReference type="PaxDb" id="10090-ENSMUSP00000027049"/>
<dbReference type="ProteomicsDB" id="291729">
    <molecule id="Q8R1Z4-1"/>
</dbReference>
<dbReference type="ProteomicsDB" id="291730">
    <molecule id="Q8R1Z4-2"/>
</dbReference>
<dbReference type="ProteomicsDB" id="291731">
    <molecule id="Q8R1Z4-3"/>
</dbReference>
<dbReference type="Antibodypedia" id="12079">
    <property type="antibodies" value="89 antibodies from 20 providers"/>
</dbReference>
<dbReference type="DNASU" id="69312"/>
<dbReference type="Ensembl" id="ENSMUST00000027049.10">
    <molecule id="Q8R1Z4-1"/>
    <property type="protein sequence ID" value="ENSMUSP00000027049.4"/>
    <property type="gene ID" value="ENSMUSG00000025916.11"/>
</dbReference>
<dbReference type="Ensembl" id="ENSMUST00000130102.8">
    <molecule id="Q8R1Z4-3"/>
    <property type="protein sequence ID" value="ENSMUSP00000115030.2"/>
    <property type="gene ID" value="ENSMUSG00000025916.11"/>
</dbReference>
<dbReference type="GeneID" id="69312"/>
<dbReference type="KEGG" id="mmu:69312"/>
<dbReference type="UCSC" id="uc007ahb.2">
    <molecule id="Q8R1Z4-1"/>
    <property type="organism name" value="mouse"/>
</dbReference>
<dbReference type="UCSC" id="uc007ahd.2">
    <molecule id="Q8R1Z4-2"/>
    <property type="organism name" value="mouse"/>
</dbReference>
<dbReference type="AGR" id="MGI:1921138"/>
<dbReference type="CTD" id="286187"/>
<dbReference type="MGI" id="MGI:1921138">
    <property type="gene designation" value="Ppp1r42"/>
</dbReference>
<dbReference type="VEuPathDB" id="HostDB:ENSMUSG00000025916"/>
<dbReference type="eggNOG" id="KOG2769">
    <property type="taxonomic scope" value="Eukaryota"/>
</dbReference>
<dbReference type="GeneTree" id="ENSGT00940000158260"/>
<dbReference type="HOGENOM" id="CLU_149705_0_0_1"/>
<dbReference type="InParanoid" id="Q8R1Z4"/>
<dbReference type="OMA" id="RRFLMNW"/>
<dbReference type="OrthoDB" id="10262005at2759"/>
<dbReference type="PhylomeDB" id="Q8R1Z4"/>
<dbReference type="TreeFam" id="TF329227"/>
<dbReference type="BioGRID-ORCS" id="69312">
    <property type="hits" value="0 hits in 77 CRISPR screens"/>
</dbReference>
<dbReference type="CD-CODE" id="01CA17F3">
    <property type="entry name" value="Centrosome"/>
</dbReference>
<dbReference type="ChiTaRS" id="Ppp1r42">
    <property type="organism name" value="mouse"/>
</dbReference>
<dbReference type="PRO" id="PR:Q8R1Z4"/>
<dbReference type="Proteomes" id="UP000000589">
    <property type="component" value="Chromosome 1"/>
</dbReference>
<dbReference type="RNAct" id="Q8R1Z4">
    <property type="molecule type" value="protein"/>
</dbReference>
<dbReference type="Bgee" id="ENSMUSG00000025916">
    <property type="expression patterns" value="Expressed in spermatid and 47 other cell types or tissues"/>
</dbReference>
<dbReference type="ExpressionAtlas" id="Q8R1Z4">
    <property type="expression patterns" value="baseline and differential"/>
</dbReference>
<dbReference type="GO" id="GO:0005813">
    <property type="term" value="C:centrosome"/>
    <property type="evidence" value="ECO:0000314"/>
    <property type="project" value="UniProtKB"/>
</dbReference>
<dbReference type="GO" id="GO:0005737">
    <property type="term" value="C:cytoplasm"/>
    <property type="evidence" value="ECO:0007669"/>
    <property type="project" value="UniProtKB-KW"/>
</dbReference>
<dbReference type="GO" id="GO:0002177">
    <property type="term" value="C:manchette"/>
    <property type="evidence" value="ECO:0000314"/>
    <property type="project" value="UniProtKB"/>
</dbReference>
<dbReference type="GO" id="GO:0015630">
    <property type="term" value="C:microtubule cytoskeleton"/>
    <property type="evidence" value="ECO:0000314"/>
    <property type="project" value="UniProtKB"/>
</dbReference>
<dbReference type="GO" id="GO:0005815">
    <property type="term" value="C:microtubule organizing center"/>
    <property type="evidence" value="ECO:0000314"/>
    <property type="project" value="UniProtKB"/>
</dbReference>
<dbReference type="GO" id="GO:0003779">
    <property type="term" value="F:actin binding"/>
    <property type="evidence" value="ECO:0000314"/>
    <property type="project" value="UniProtKB"/>
</dbReference>
<dbReference type="GO" id="GO:0070840">
    <property type="term" value="F:dynein complex binding"/>
    <property type="evidence" value="ECO:0000314"/>
    <property type="project" value="UniProtKB"/>
</dbReference>
<dbReference type="GO" id="GO:0015631">
    <property type="term" value="F:tubulin binding"/>
    <property type="evidence" value="ECO:0000314"/>
    <property type="project" value="UniProtKB"/>
</dbReference>
<dbReference type="GO" id="GO:0010921">
    <property type="term" value="P:regulation of phosphatase activity"/>
    <property type="evidence" value="ECO:0000314"/>
    <property type="project" value="UniProtKB"/>
</dbReference>
<dbReference type="CDD" id="cd21340">
    <property type="entry name" value="PPP1R42"/>
    <property type="match status" value="1"/>
</dbReference>
<dbReference type="FunFam" id="3.80.10.10:FF:000293">
    <property type="entry name" value="Protein phosphatase 1 regulatory subunit 42"/>
    <property type="match status" value="1"/>
</dbReference>
<dbReference type="FunFam" id="3.80.10.10:FF:000201">
    <property type="entry name" value="protein phosphatase 1 regulatory subunit 42"/>
    <property type="match status" value="1"/>
</dbReference>
<dbReference type="Gene3D" id="3.80.10.10">
    <property type="entry name" value="Ribonuclease Inhibitor"/>
    <property type="match status" value="2"/>
</dbReference>
<dbReference type="InterPro" id="IPR001611">
    <property type="entry name" value="Leu-rich_rpt"/>
</dbReference>
<dbReference type="InterPro" id="IPR025875">
    <property type="entry name" value="Leu-rich_rpt_4"/>
</dbReference>
<dbReference type="InterPro" id="IPR032675">
    <property type="entry name" value="LRR_dom_sf"/>
</dbReference>
<dbReference type="InterPro" id="IPR050836">
    <property type="entry name" value="SDS22/Internalin_LRR"/>
</dbReference>
<dbReference type="PANTHER" id="PTHR46652">
    <property type="entry name" value="LEUCINE-RICH REPEAT AND IQ DOMAIN-CONTAINING PROTEIN 1-RELATED"/>
    <property type="match status" value="1"/>
</dbReference>
<dbReference type="PANTHER" id="PTHR46652:SF3">
    <property type="entry name" value="LEUCINE-RICH REPEAT-CONTAINING PROTEIN 9"/>
    <property type="match status" value="1"/>
</dbReference>
<dbReference type="Pfam" id="PF12799">
    <property type="entry name" value="LRR_4"/>
    <property type="match status" value="1"/>
</dbReference>
<dbReference type="Pfam" id="PF14580">
    <property type="entry name" value="LRR_9"/>
    <property type="match status" value="1"/>
</dbReference>
<dbReference type="SMART" id="SM00365">
    <property type="entry name" value="LRR_SD22"/>
    <property type="match status" value="5"/>
</dbReference>
<dbReference type="SUPFAM" id="SSF52058">
    <property type="entry name" value="L domain-like"/>
    <property type="match status" value="1"/>
</dbReference>
<dbReference type="PROSITE" id="PS51450">
    <property type="entry name" value="LRR"/>
    <property type="match status" value="6"/>
</dbReference>
<comment type="function">
    <text evidence="4">Regulates phosphatase activity of protein phosphatase 1 (PP1) complexes in the testis.</text>
</comment>
<comment type="subunit">
    <text evidence="2 3 4">Interacts with PPP1CC isoform gamma-2; the interaction is direct. Interacts with actin, dynein, KIF5B, KIFC1 and tubulin. Associates with microtubules.</text>
</comment>
<comment type="subcellular location">
    <subcellularLocation>
        <location>Cytoplasm</location>
        <location>Cytoskeleton</location>
    </subcellularLocation>
    <subcellularLocation>
        <location>Cytoplasm</location>
        <location>Cytoskeleton</location>
        <location>Microtubule organizing center</location>
        <location>Centrosome</location>
    </subcellularLocation>
    <text>Colocalizes with alpha tubulin to the manchette of developing spermatids. Detected to nuclear rim in pachytene spermatocytes. Detected at nuclear surface, opposite the acrosome in elongating spermatids. Detected at the microtubule- organizing center (MTOC). Localized to the centrosomal region of late-stage spermatids.</text>
</comment>
<comment type="alternative products">
    <event type="alternative splicing"/>
    <isoform>
        <id>Q8R1Z4-1</id>
        <name>1</name>
        <sequence type="displayed"/>
    </isoform>
    <isoform>
        <id>Q8R1Z4-2</id>
        <name>2</name>
        <sequence type="described" ref="VSP_032590 VSP_032591"/>
    </isoform>
    <isoform>
        <id>Q8R1Z4-3</id>
        <name>3</name>
        <sequence type="described" ref="VSP_032589"/>
    </isoform>
</comment>
<comment type="tissue specificity">
    <text evidence="2">Testis-specific. Expressed in spermatids (at protein level). Testis-specific.</text>
</comment>
<comment type="PTM">
    <text evidence="4">Phosphorylated; during the first round of spermatogenesis with a marginal increase at 21 days after birth.</text>
</comment>
<proteinExistence type="evidence at protein level"/>